<comment type="subcellular location">
    <subcellularLocation>
        <location evidence="1">Cell membrane</location>
        <topology evidence="1">Multi-pass membrane protein</topology>
    </subcellularLocation>
</comment>
<comment type="similarity">
    <text evidence="1">Belongs to the UPF0391 family.</text>
</comment>
<gene>
    <name type="ordered locus">YPTB0577</name>
</gene>
<reference key="1">
    <citation type="journal article" date="2004" name="Proc. Natl. Acad. Sci. U.S.A.">
        <title>Insights into the evolution of Yersinia pestis through whole-genome comparison with Yersinia pseudotuberculosis.</title>
        <authorList>
            <person name="Chain P.S.G."/>
            <person name="Carniel E."/>
            <person name="Larimer F.W."/>
            <person name="Lamerdin J."/>
            <person name="Stoutland P.O."/>
            <person name="Regala W.M."/>
            <person name="Georgescu A.M."/>
            <person name="Vergez L.M."/>
            <person name="Land M.L."/>
            <person name="Motin V.L."/>
            <person name="Brubaker R.R."/>
            <person name="Fowler J."/>
            <person name="Hinnebusch J."/>
            <person name="Marceau M."/>
            <person name="Medigue C."/>
            <person name="Simonet M."/>
            <person name="Chenal-Francisque V."/>
            <person name="Souza B."/>
            <person name="Dacheux D."/>
            <person name="Elliott J.M."/>
            <person name="Derbise A."/>
            <person name="Hauser L.J."/>
            <person name="Garcia E."/>
        </authorList>
    </citation>
    <scope>NUCLEOTIDE SEQUENCE [LARGE SCALE GENOMIC DNA]</scope>
    <source>
        <strain>IP32953</strain>
    </source>
</reference>
<feature type="chain" id="PRO_0000256811" description="UPF0391 membrane protein YPTB0577">
    <location>
        <begin position="1"/>
        <end position="53"/>
    </location>
</feature>
<feature type="transmembrane region" description="Helical" evidence="1">
    <location>
        <begin position="4"/>
        <end position="24"/>
    </location>
</feature>
<feature type="transmembrane region" description="Helical" evidence="1">
    <location>
        <begin position="27"/>
        <end position="47"/>
    </location>
</feature>
<dbReference type="EMBL" id="BX936398">
    <property type="protein sequence ID" value="CAH19817.1"/>
    <property type="molecule type" value="Genomic_DNA"/>
</dbReference>
<dbReference type="RefSeq" id="WP_011191683.1">
    <property type="nucleotide sequence ID" value="NC_006155.1"/>
</dbReference>
<dbReference type="GeneID" id="82549814"/>
<dbReference type="KEGG" id="ypo:BZ17_1982"/>
<dbReference type="KEGG" id="yps:YPTB0577"/>
<dbReference type="PATRIC" id="fig|273123.14.peg.2108"/>
<dbReference type="Proteomes" id="UP000001011">
    <property type="component" value="Chromosome"/>
</dbReference>
<dbReference type="GO" id="GO:0005886">
    <property type="term" value="C:plasma membrane"/>
    <property type="evidence" value="ECO:0007669"/>
    <property type="project" value="UniProtKB-SubCell"/>
</dbReference>
<dbReference type="HAMAP" id="MF_01361">
    <property type="entry name" value="UPF0391"/>
    <property type="match status" value="1"/>
</dbReference>
<dbReference type="InterPro" id="IPR009760">
    <property type="entry name" value="DUF1328"/>
</dbReference>
<dbReference type="NCBIfam" id="NF010229">
    <property type="entry name" value="PRK13682.1-4"/>
    <property type="match status" value="1"/>
</dbReference>
<dbReference type="NCBIfam" id="NF010230">
    <property type="entry name" value="PRK13682.1-5"/>
    <property type="match status" value="1"/>
</dbReference>
<dbReference type="Pfam" id="PF07043">
    <property type="entry name" value="DUF1328"/>
    <property type="match status" value="1"/>
</dbReference>
<dbReference type="PIRSF" id="PIRSF036466">
    <property type="entry name" value="UCP036466"/>
    <property type="match status" value="1"/>
</dbReference>
<organism>
    <name type="scientific">Yersinia pseudotuberculosis serotype I (strain IP32953)</name>
    <dbReference type="NCBI Taxonomy" id="273123"/>
    <lineage>
        <taxon>Bacteria</taxon>
        <taxon>Pseudomonadati</taxon>
        <taxon>Pseudomonadota</taxon>
        <taxon>Gammaproteobacteria</taxon>
        <taxon>Enterobacterales</taxon>
        <taxon>Yersiniaceae</taxon>
        <taxon>Yersinia</taxon>
    </lineage>
</organism>
<proteinExistence type="inferred from homology"/>
<accession>Q66EW4</accession>
<sequence length="53" mass="5665">MFRWGIIFLIIALIAAALGFGGLAGTAAWAAKVVFVVGIILFLISLFTGRKRL</sequence>
<protein>
    <recommendedName>
        <fullName evidence="1">UPF0391 membrane protein YPTB0577</fullName>
    </recommendedName>
</protein>
<evidence type="ECO:0000255" key="1">
    <source>
        <dbReference type="HAMAP-Rule" id="MF_01361"/>
    </source>
</evidence>
<name>Y577_YERPS</name>
<keyword id="KW-1003">Cell membrane</keyword>
<keyword id="KW-0472">Membrane</keyword>
<keyword id="KW-0812">Transmembrane</keyword>
<keyword id="KW-1133">Transmembrane helix</keyword>